<organism>
    <name type="scientific">Delftia acidovorans (strain DSM 14801 / SPH-1)</name>
    <dbReference type="NCBI Taxonomy" id="398578"/>
    <lineage>
        <taxon>Bacteria</taxon>
        <taxon>Pseudomonadati</taxon>
        <taxon>Pseudomonadota</taxon>
        <taxon>Betaproteobacteria</taxon>
        <taxon>Burkholderiales</taxon>
        <taxon>Comamonadaceae</taxon>
        <taxon>Delftia</taxon>
    </lineage>
</organism>
<accession>A9BMM2</accession>
<name>LPXD_DELAS</name>
<reference key="1">
    <citation type="submission" date="2007-11" db="EMBL/GenBank/DDBJ databases">
        <title>Complete sequence of Delftia acidovorans DSM 14801 / SPH-1.</title>
        <authorList>
            <person name="Copeland A."/>
            <person name="Lucas S."/>
            <person name="Lapidus A."/>
            <person name="Barry K."/>
            <person name="Glavina del Rio T."/>
            <person name="Dalin E."/>
            <person name="Tice H."/>
            <person name="Pitluck S."/>
            <person name="Lowry S."/>
            <person name="Clum A."/>
            <person name="Schmutz J."/>
            <person name="Larimer F."/>
            <person name="Land M."/>
            <person name="Hauser L."/>
            <person name="Kyrpides N."/>
            <person name="Kim E."/>
            <person name="Schleheck D."/>
            <person name="Richardson P."/>
        </authorList>
    </citation>
    <scope>NUCLEOTIDE SEQUENCE [LARGE SCALE GENOMIC DNA]</scope>
    <source>
        <strain>DSM 14801 / SPH-1</strain>
    </source>
</reference>
<feature type="chain" id="PRO_1000127676" description="UDP-3-O-acylglucosamine N-acyltransferase">
    <location>
        <begin position="1"/>
        <end position="335"/>
    </location>
</feature>
<feature type="active site" description="Proton acceptor" evidence="1">
    <location>
        <position position="225"/>
    </location>
</feature>
<proteinExistence type="inferred from homology"/>
<comment type="function">
    <text evidence="1">Catalyzes the N-acylation of UDP-3-O-acylglucosamine using 3-hydroxyacyl-ACP as the acyl donor. Is involved in the biosynthesis of lipid A, a phosphorylated glycolipid that anchors the lipopolysaccharide to the outer membrane of the cell.</text>
</comment>
<comment type="catalytic activity">
    <reaction evidence="1">
        <text>a UDP-3-O-[(3R)-3-hydroxyacyl]-alpha-D-glucosamine + a (3R)-hydroxyacyl-[ACP] = a UDP-2-N,3-O-bis[(3R)-3-hydroxyacyl]-alpha-D-glucosamine + holo-[ACP] + H(+)</text>
        <dbReference type="Rhea" id="RHEA:53836"/>
        <dbReference type="Rhea" id="RHEA-COMP:9685"/>
        <dbReference type="Rhea" id="RHEA-COMP:9945"/>
        <dbReference type="ChEBI" id="CHEBI:15378"/>
        <dbReference type="ChEBI" id="CHEBI:64479"/>
        <dbReference type="ChEBI" id="CHEBI:78827"/>
        <dbReference type="ChEBI" id="CHEBI:137740"/>
        <dbReference type="ChEBI" id="CHEBI:137748"/>
        <dbReference type="EC" id="2.3.1.191"/>
    </reaction>
</comment>
<comment type="pathway">
    <text evidence="1">Bacterial outer membrane biogenesis; LPS lipid A biosynthesis.</text>
</comment>
<comment type="subunit">
    <text evidence="1">Homotrimer.</text>
</comment>
<comment type="similarity">
    <text evidence="1">Belongs to the transferase hexapeptide repeat family. LpxD subfamily.</text>
</comment>
<protein>
    <recommendedName>
        <fullName evidence="1">UDP-3-O-acylglucosamine N-acyltransferase</fullName>
        <ecNumber evidence="1">2.3.1.191</ecNumber>
    </recommendedName>
</protein>
<dbReference type="EC" id="2.3.1.191" evidence="1"/>
<dbReference type="EMBL" id="CP000884">
    <property type="protein sequence ID" value="ABX37567.1"/>
    <property type="molecule type" value="Genomic_DNA"/>
</dbReference>
<dbReference type="RefSeq" id="WP_012206737.1">
    <property type="nucleotide sequence ID" value="NC_010002.1"/>
</dbReference>
<dbReference type="SMR" id="A9BMM2"/>
<dbReference type="STRING" id="398578.Daci_4938"/>
<dbReference type="GeneID" id="24118375"/>
<dbReference type="KEGG" id="dac:Daci_4938"/>
<dbReference type="eggNOG" id="COG1044">
    <property type="taxonomic scope" value="Bacteria"/>
</dbReference>
<dbReference type="HOGENOM" id="CLU_049865_0_1_4"/>
<dbReference type="UniPathway" id="UPA00973"/>
<dbReference type="Proteomes" id="UP000000784">
    <property type="component" value="Chromosome"/>
</dbReference>
<dbReference type="GO" id="GO:0016020">
    <property type="term" value="C:membrane"/>
    <property type="evidence" value="ECO:0007669"/>
    <property type="project" value="GOC"/>
</dbReference>
<dbReference type="GO" id="GO:0016410">
    <property type="term" value="F:N-acyltransferase activity"/>
    <property type="evidence" value="ECO:0007669"/>
    <property type="project" value="InterPro"/>
</dbReference>
<dbReference type="GO" id="GO:0009245">
    <property type="term" value="P:lipid A biosynthetic process"/>
    <property type="evidence" value="ECO:0007669"/>
    <property type="project" value="UniProtKB-UniRule"/>
</dbReference>
<dbReference type="CDD" id="cd03352">
    <property type="entry name" value="LbH_LpxD"/>
    <property type="match status" value="1"/>
</dbReference>
<dbReference type="Gene3D" id="1.20.5.170">
    <property type="match status" value="1"/>
</dbReference>
<dbReference type="Gene3D" id="2.160.10.10">
    <property type="entry name" value="Hexapeptide repeat proteins"/>
    <property type="match status" value="1"/>
</dbReference>
<dbReference type="Gene3D" id="3.40.1390.10">
    <property type="entry name" value="MurE/MurF, N-terminal domain"/>
    <property type="match status" value="1"/>
</dbReference>
<dbReference type="HAMAP" id="MF_00523">
    <property type="entry name" value="LpxD"/>
    <property type="match status" value="1"/>
</dbReference>
<dbReference type="InterPro" id="IPR001451">
    <property type="entry name" value="Hexapep"/>
</dbReference>
<dbReference type="InterPro" id="IPR018357">
    <property type="entry name" value="Hexapep_transf_CS"/>
</dbReference>
<dbReference type="InterPro" id="IPR007691">
    <property type="entry name" value="LpxD"/>
</dbReference>
<dbReference type="InterPro" id="IPR011004">
    <property type="entry name" value="Trimer_LpxA-like_sf"/>
</dbReference>
<dbReference type="InterPro" id="IPR020573">
    <property type="entry name" value="UDP_GlcNAc_AcTrfase_non-rep"/>
</dbReference>
<dbReference type="NCBIfam" id="TIGR01853">
    <property type="entry name" value="lipid_A_lpxD"/>
    <property type="match status" value="1"/>
</dbReference>
<dbReference type="NCBIfam" id="NF002060">
    <property type="entry name" value="PRK00892.1"/>
    <property type="match status" value="1"/>
</dbReference>
<dbReference type="PANTHER" id="PTHR43378">
    <property type="entry name" value="UDP-3-O-ACYLGLUCOSAMINE N-ACYLTRANSFERASE"/>
    <property type="match status" value="1"/>
</dbReference>
<dbReference type="PANTHER" id="PTHR43378:SF2">
    <property type="entry name" value="UDP-3-O-ACYLGLUCOSAMINE N-ACYLTRANSFERASE 1, MITOCHONDRIAL-RELATED"/>
    <property type="match status" value="1"/>
</dbReference>
<dbReference type="Pfam" id="PF14602">
    <property type="entry name" value="Hexapep_2"/>
    <property type="match status" value="3"/>
</dbReference>
<dbReference type="Pfam" id="PF04613">
    <property type="entry name" value="LpxD"/>
    <property type="match status" value="1"/>
</dbReference>
<dbReference type="SUPFAM" id="SSF51161">
    <property type="entry name" value="Trimeric LpxA-like enzymes"/>
    <property type="match status" value="1"/>
</dbReference>
<dbReference type="PROSITE" id="PS00101">
    <property type="entry name" value="HEXAPEP_TRANSFERASES"/>
    <property type="match status" value="1"/>
</dbReference>
<sequence length="335" mass="35107">MSVLLGQILDALGGELVGGDREMPISRIAPLDSAGAGDLSFLSNPRYRQQLAASEAACVIVAPAMRELAQQRGACIVVPDPYAYFARATQWWKRNCRSVAPAGIHPSAVVHESAIVDASATIGPLCVVEEGATIGAHTVLKSRVTIGENCHVGARCLLHSGVVLGADGFGFAPENGAWVKIEQLGGVRIGDDVEIGANTCIDRGALDDTVIEDGVKLDNLIQIGHNVHVGKHTAMAGCVGVAGSARIGAHCTVGGGAIVLGHLQLADRVHISAATVVTRSLTQSGVYTGMFPVDENAKWEKNAATLKQLHSMRDRIKALERQLQQSADQGHNGTQ</sequence>
<keyword id="KW-0012">Acyltransferase</keyword>
<keyword id="KW-0441">Lipid A biosynthesis</keyword>
<keyword id="KW-0444">Lipid biosynthesis</keyword>
<keyword id="KW-0443">Lipid metabolism</keyword>
<keyword id="KW-1185">Reference proteome</keyword>
<keyword id="KW-0677">Repeat</keyword>
<keyword id="KW-0808">Transferase</keyword>
<gene>
    <name evidence="1" type="primary">lpxD</name>
    <name type="ordered locus">Daci_4938</name>
</gene>
<evidence type="ECO:0000255" key="1">
    <source>
        <dbReference type="HAMAP-Rule" id="MF_00523"/>
    </source>
</evidence>